<sequence length="411" mass="44522">MAESAFPSAQQPLRVGTKDDKAAAFQKISEEDEYEVTSPTDPTFRSANAAAASSSTGSPFFGGSYGENSGPIRFNRSPFDNGPREEDEEGADEFPPEDIRPTGAANQGFPNNYALGRRTSVSAESLNPTSAGSDSWTPPYHEKTEEQLSRLKTAVSSNFLFSHLDDDQFKSVLDALVEKPIPAKGIKVISQGDAGDYFYIVENGHFDFMIHPSGSVQPGPDGMGNKVGSVGPGGSFGELALMYNAPRAATVVSVDPKSTLWALDRITFRRILMDSAFQRRRMYEAFLEEVPLLSSLKPYERAKIADALDAIKYPAGSTIIAEGDPGDAFYLLESGEADAFKNGVEGPVKSYKRGDYFGELALLDDKPRAASIVAKTDVKVAKLGRDGFKRLLGPVEDIMRRAEYESNPVPA</sequence>
<feature type="chain" id="PRO_0000205401" description="cAMP-dependent protein kinase regulatory subunit">
    <location>
        <begin position="1"/>
        <end position="411"/>
    </location>
</feature>
<feature type="region of interest" description="Disordered" evidence="3">
    <location>
        <begin position="1"/>
        <end position="144"/>
    </location>
</feature>
<feature type="region of interest" description="Dimerization and phosphorylation" evidence="2">
    <location>
        <begin position="23"/>
        <end position="159"/>
    </location>
</feature>
<feature type="compositionally biased region" description="Low complexity" evidence="3">
    <location>
        <begin position="46"/>
        <end position="58"/>
    </location>
</feature>
<feature type="compositionally biased region" description="Acidic residues" evidence="3">
    <location>
        <begin position="85"/>
        <end position="96"/>
    </location>
</feature>
<feature type="compositionally biased region" description="Polar residues" evidence="3">
    <location>
        <begin position="119"/>
        <end position="136"/>
    </location>
</feature>
<feature type="binding site">
    <location>
        <begin position="160"/>
        <end position="289"/>
    </location>
    <ligand>
        <name>3',5'-cyclic AMP</name>
        <dbReference type="ChEBI" id="CHEBI:58165"/>
        <label>1</label>
    </ligand>
</feature>
<feature type="binding site" evidence="1">
    <location>
        <position position="238"/>
    </location>
    <ligand>
        <name>3',5'-cyclic AMP</name>
        <dbReference type="ChEBI" id="CHEBI:58165"/>
        <label>1</label>
    </ligand>
</feature>
<feature type="binding site" evidence="1">
    <location>
        <position position="247"/>
    </location>
    <ligand>
        <name>3',5'-cyclic AMP</name>
        <dbReference type="ChEBI" id="CHEBI:58165"/>
        <label>1</label>
    </ligand>
</feature>
<feature type="binding site">
    <location>
        <begin position="292"/>
        <end position="411"/>
    </location>
    <ligand>
        <name>3',5'-cyclic AMP</name>
        <dbReference type="ChEBI" id="CHEBI:58165"/>
        <label>2</label>
    </ligand>
</feature>
<feature type="binding site" evidence="1">
    <location>
        <position position="359"/>
    </location>
    <ligand>
        <name>3',5'-cyclic AMP</name>
        <dbReference type="ChEBI" id="CHEBI:58165"/>
        <label>2</label>
    </ligand>
</feature>
<feature type="binding site" evidence="1">
    <location>
        <position position="368"/>
    </location>
    <ligand>
        <name>3',5'-cyclic AMP</name>
        <dbReference type="ChEBI" id="CHEBI:58165"/>
        <label>2</label>
    </ligand>
</feature>
<feature type="modified residue" description="Phosphoserine" evidence="1">
    <location>
        <position position="120"/>
    </location>
</feature>
<reference key="1">
    <citation type="submission" date="2000-11" db="EMBL/GenBank/DDBJ databases">
        <title>Cyclic AMP-dependent protein kinase is involved in morphogenesis of Aspergillus niger.</title>
        <authorList>
            <person name="Staudohar M."/>
            <person name="Bencina M."/>
            <person name="Van de Vondervoort P."/>
            <person name="Legisa M."/>
            <person name="Panneman H."/>
            <person name="Ruijter G."/>
            <person name="Visser J."/>
        </authorList>
    </citation>
    <scope>NUCLEOTIDE SEQUENCE [GENOMIC DNA]</scope>
    <source>
        <strain>ATCC 9029 / NRRL 3 / CBS 120.49 / DSM 2466 / N400 / FGSC 732</strain>
    </source>
</reference>
<gene>
    <name type="primary">pkaR</name>
</gene>
<keyword id="KW-0114">cAMP</keyword>
<keyword id="KW-0116">cAMP-binding</keyword>
<keyword id="KW-0547">Nucleotide-binding</keyword>
<keyword id="KW-0597">Phosphoprotein</keyword>
<keyword id="KW-0677">Repeat</keyword>
<accession>Q9C196</accession>
<protein>
    <recommendedName>
        <fullName>cAMP-dependent protein kinase regulatory subunit</fullName>
        <shortName>PKA regulatory subunit</shortName>
    </recommendedName>
</protein>
<comment type="subunit">
    <text evidence="1">Tetramer, composed of 2 regulatory (R) and 2 catalytic (C) subunits. In the presence of cAMP it dissociates into 2 active monomeric C subunits and an R dimer (By similarity).</text>
</comment>
<comment type="similarity">
    <text evidence="4">Belongs to the cAMP-dependent kinase regulatory chain family.</text>
</comment>
<proteinExistence type="inferred from homology"/>
<name>KAPR_ASPNG</name>
<evidence type="ECO:0000250" key="1"/>
<evidence type="ECO:0000255" key="2"/>
<evidence type="ECO:0000256" key="3">
    <source>
        <dbReference type="SAM" id="MobiDB-lite"/>
    </source>
</evidence>
<evidence type="ECO:0000305" key="4"/>
<organism>
    <name type="scientific">Aspergillus niger</name>
    <dbReference type="NCBI Taxonomy" id="5061"/>
    <lineage>
        <taxon>Eukaryota</taxon>
        <taxon>Fungi</taxon>
        <taxon>Dikarya</taxon>
        <taxon>Ascomycota</taxon>
        <taxon>Pezizomycotina</taxon>
        <taxon>Eurotiomycetes</taxon>
        <taxon>Eurotiomycetidae</taxon>
        <taxon>Eurotiales</taxon>
        <taxon>Aspergillaceae</taxon>
        <taxon>Aspergillus</taxon>
        <taxon>Aspergillus subgen. Circumdati</taxon>
    </lineage>
</organism>
<dbReference type="EMBL" id="AJ296317">
    <property type="protein sequence ID" value="CAC36308.1"/>
    <property type="molecule type" value="Genomic_DNA"/>
</dbReference>
<dbReference type="SMR" id="Q9C196"/>
<dbReference type="PaxDb" id="5061-CADANGAP00012604"/>
<dbReference type="VEuPathDB" id="FungiDB:An16g03740"/>
<dbReference type="VEuPathDB" id="FungiDB:ASPNIDRAFT2_1091608"/>
<dbReference type="VEuPathDB" id="FungiDB:ATCC64974_70150"/>
<dbReference type="VEuPathDB" id="FungiDB:M747DRAFT_23407"/>
<dbReference type="eggNOG" id="KOG1113">
    <property type="taxonomic scope" value="Eukaryota"/>
</dbReference>
<dbReference type="OrthoDB" id="417078at2759"/>
<dbReference type="GO" id="GO:0005952">
    <property type="term" value="C:cAMP-dependent protein kinase complex"/>
    <property type="evidence" value="ECO:0007669"/>
    <property type="project" value="InterPro"/>
</dbReference>
<dbReference type="GO" id="GO:0005829">
    <property type="term" value="C:cytosol"/>
    <property type="evidence" value="ECO:0007669"/>
    <property type="project" value="TreeGrafter"/>
</dbReference>
<dbReference type="GO" id="GO:0005634">
    <property type="term" value="C:nucleus"/>
    <property type="evidence" value="ECO:0007669"/>
    <property type="project" value="TreeGrafter"/>
</dbReference>
<dbReference type="GO" id="GO:0030552">
    <property type="term" value="F:cAMP binding"/>
    <property type="evidence" value="ECO:0007669"/>
    <property type="project" value="UniProtKB-KW"/>
</dbReference>
<dbReference type="GO" id="GO:0004862">
    <property type="term" value="F:cAMP-dependent protein kinase inhibitor activity"/>
    <property type="evidence" value="ECO:0007669"/>
    <property type="project" value="TreeGrafter"/>
</dbReference>
<dbReference type="GO" id="GO:0034236">
    <property type="term" value="F:protein kinase A catalytic subunit binding"/>
    <property type="evidence" value="ECO:0007669"/>
    <property type="project" value="TreeGrafter"/>
</dbReference>
<dbReference type="CDD" id="cd00038">
    <property type="entry name" value="CAP_ED"/>
    <property type="match status" value="2"/>
</dbReference>
<dbReference type="FunFam" id="2.60.120.10:FF:000039">
    <property type="entry name" value="cAMP-dependent protein kinase regulatory subunit"/>
    <property type="match status" value="1"/>
</dbReference>
<dbReference type="FunFam" id="2.60.120.10:FF:000006">
    <property type="entry name" value="cAMP-dependent protein kinase type I-alpha regulatory subunit"/>
    <property type="match status" value="1"/>
</dbReference>
<dbReference type="Gene3D" id="2.60.120.10">
    <property type="entry name" value="Jelly Rolls"/>
    <property type="match status" value="2"/>
</dbReference>
<dbReference type="InterPro" id="IPR050503">
    <property type="entry name" value="cAMP-dep_PK_reg_su-like"/>
</dbReference>
<dbReference type="InterPro" id="IPR012198">
    <property type="entry name" value="cAMP_dep_PK_reg_su"/>
</dbReference>
<dbReference type="InterPro" id="IPR018488">
    <property type="entry name" value="cNMP-bd_CS"/>
</dbReference>
<dbReference type="InterPro" id="IPR000595">
    <property type="entry name" value="cNMP-bd_dom"/>
</dbReference>
<dbReference type="InterPro" id="IPR018490">
    <property type="entry name" value="cNMP-bd_dom_sf"/>
</dbReference>
<dbReference type="InterPro" id="IPR014710">
    <property type="entry name" value="RmlC-like_jellyroll"/>
</dbReference>
<dbReference type="PANTHER" id="PTHR11635">
    <property type="entry name" value="CAMP-DEPENDENT PROTEIN KINASE REGULATORY CHAIN"/>
    <property type="match status" value="1"/>
</dbReference>
<dbReference type="PANTHER" id="PTHR11635:SF152">
    <property type="entry name" value="CAMP-DEPENDENT PROTEIN KINASE TYPE I REGULATORY SUBUNIT-RELATED"/>
    <property type="match status" value="1"/>
</dbReference>
<dbReference type="Pfam" id="PF00027">
    <property type="entry name" value="cNMP_binding"/>
    <property type="match status" value="2"/>
</dbReference>
<dbReference type="PIRSF" id="PIRSF000548">
    <property type="entry name" value="PK_regulatory"/>
    <property type="match status" value="1"/>
</dbReference>
<dbReference type="PRINTS" id="PR00103">
    <property type="entry name" value="CAMPKINASE"/>
</dbReference>
<dbReference type="SMART" id="SM00100">
    <property type="entry name" value="cNMP"/>
    <property type="match status" value="2"/>
</dbReference>
<dbReference type="SUPFAM" id="SSF51206">
    <property type="entry name" value="cAMP-binding domain-like"/>
    <property type="match status" value="2"/>
</dbReference>
<dbReference type="PROSITE" id="PS00888">
    <property type="entry name" value="CNMP_BINDING_1"/>
    <property type="match status" value="2"/>
</dbReference>
<dbReference type="PROSITE" id="PS00889">
    <property type="entry name" value="CNMP_BINDING_2"/>
    <property type="match status" value="2"/>
</dbReference>
<dbReference type="PROSITE" id="PS50042">
    <property type="entry name" value="CNMP_BINDING_3"/>
    <property type="match status" value="2"/>
</dbReference>